<proteinExistence type="inferred from homology"/>
<reference key="1">
    <citation type="journal article" date="1999" name="Nature">
        <title>Sequence and analysis of chromosome 4 of the plant Arabidopsis thaliana.</title>
        <authorList>
            <person name="Mayer K.F.X."/>
            <person name="Schueller C."/>
            <person name="Wambutt R."/>
            <person name="Murphy G."/>
            <person name="Volckaert G."/>
            <person name="Pohl T."/>
            <person name="Duesterhoeft A."/>
            <person name="Stiekema W."/>
            <person name="Entian K.-D."/>
            <person name="Terryn N."/>
            <person name="Harris B."/>
            <person name="Ansorge W."/>
            <person name="Brandt P."/>
            <person name="Grivell L.A."/>
            <person name="Rieger M."/>
            <person name="Weichselgartner M."/>
            <person name="de Simone V."/>
            <person name="Obermaier B."/>
            <person name="Mache R."/>
            <person name="Mueller M."/>
            <person name="Kreis M."/>
            <person name="Delseny M."/>
            <person name="Puigdomenech P."/>
            <person name="Watson M."/>
            <person name="Schmidtheini T."/>
            <person name="Reichert B."/>
            <person name="Portetelle D."/>
            <person name="Perez-Alonso M."/>
            <person name="Boutry M."/>
            <person name="Bancroft I."/>
            <person name="Vos P."/>
            <person name="Hoheisel J."/>
            <person name="Zimmermann W."/>
            <person name="Wedler H."/>
            <person name="Ridley P."/>
            <person name="Langham S.-A."/>
            <person name="McCullagh B."/>
            <person name="Bilham L."/>
            <person name="Robben J."/>
            <person name="van der Schueren J."/>
            <person name="Grymonprez B."/>
            <person name="Chuang Y.-J."/>
            <person name="Vandenbussche F."/>
            <person name="Braeken M."/>
            <person name="Weltjens I."/>
            <person name="Voet M."/>
            <person name="Bastiaens I."/>
            <person name="Aert R."/>
            <person name="Defoor E."/>
            <person name="Weitzenegger T."/>
            <person name="Bothe G."/>
            <person name="Ramsperger U."/>
            <person name="Hilbert H."/>
            <person name="Braun M."/>
            <person name="Holzer E."/>
            <person name="Brandt A."/>
            <person name="Peters S."/>
            <person name="van Staveren M."/>
            <person name="Dirkse W."/>
            <person name="Mooijman P."/>
            <person name="Klein Lankhorst R."/>
            <person name="Rose M."/>
            <person name="Hauf J."/>
            <person name="Koetter P."/>
            <person name="Berneiser S."/>
            <person name="Hempel S."/>
            <person name="Feldpausch M."/>
            <person name="Lamberth S."/>
            <person name="Van den Daele H."/>
            <person name="De Keyser A."/>
            <person name="Buysshaert C."/>
            <person name="Gielen J."/>
            <person name="Villarroel R."/>
            <person name="De Clercq R."/>
            <person name="van Montagu M."/>
            <person name="Rogers J."/>
            <person name="Cronin A."/>
            <person name="Quail M.A."/>
            <person name="Bray-Allen S."/>
            <person name="Clark L."/>
            <person name="Doggett J."/>
            <person name="Hall S."/>
            <person name="Kay M."/>
            <person name="Lennard N."/>
            <person name="McLay K."/>
            <person name="Mayes R."/>
            <person name="Pettett A."/>
            <person name="Rajandream M.A."/>
            <person name="Lyne M."/>
            <person name="Benes V."/>
            <person name="Rechmann S."/>
            <person name="Borkova D."/>
            <person name="Bloecker H."/>
            <person name="Scharfe M."/>
            <person name="Grimm M."/>
            <person name="Loehnert T.-H."/>
            <person name="Dose S."/>
            <person name="de Haan M."/>
            <person name="Maarse A.C."/>
            <person name="Schaefer M."/>
            <person name="Mueller-Auer S."/>
            <person name="Gabel C."/>
            <person name="Fuchs M."/>
            <person name="Fartmann B."/>
            <person name="Granderath K."/>
            <person name="Dauner D."/>
            <person name="Herzl A."/>
            <person name="Neumann S."/>
            <person name="Argiriou A."/>
            <person name="Vitale D."/>
            <person name="Liguori R."/>
            <person name="Piravandi E."/>
            <person name="Massenet O."/>
            <person name="Quigley F."/>
            <person name="Clabauld G."/>
            <person name="Muendlein A."/>
            <person name="Felber R."/>
            <person name="Schnabl S."/>
            <person name="Hiller R."/>
            <person name="Schmidt W."/>
            <person name="Lecharny A."/>
            <person name="Aubourg S."/>
            <person name="Chefdor F."/>
            <person name="Cooke R."/>
            <person name="Berger C."/>
            <person name="Monfort A."/>
            <person name="Casacuberta E."/>
            <person name="Gibbons T."/>
            <person name="Weber N."/>
            <person name="Vandenbol M."/>
            <person name="Bargues M."/>
            <person name="Terol J."/>
            <person name="Torres A."/>
            <person name="Perez-Perez A."/>
            <person name="Purnelle B."/>
            <person name="Bent E."/>
            <person name="Johnson S."/>
            <person name="Tacon D."/>
            <person name="Jesse T."/>
            <person name="Heijnen L."/>
            <person name="Schwarz S."/>
            <person name="Scholler P."/>
            <person name="Heber S."/>
            <person name="Francs P."/>
            <person name="Bielke C."/>
            <person name="Frishman D."/>
            <person name="Haase D."/>
            <person name="Lemcke K."/>
            <person name="Mewes H.-W."/>
            <person name="Stocker S."/>
            <person name="Zaccaria P."/>
            <person name="Bevan M."/>
            <person name="Wilson R.K."/>
            <person name="de la Bastide M."/>
            <person name="Habermann K."/>
            <person name="Parnell L."/>
            <person name="Dedhia N."/>
            <person name="Gnoj L."/>
            <person name="Schutz K."/>
            <person name="Huang E."/>
            <person name="Spiegel L."/>
            <person name="Sekhon M."/>
            <person name="Murray J."/>
            <person name="Sheet P."/>
            <person name="Cordes M."/>
            <person name="Abu-Threideh J."/>
            <person name="Stoneking T."/>
            <person name="Kalicki J."/>
            <person name="Graves T."/>
            <person name="Harmon G."/>
            <person name="Edwards J."/>
            <person name="Latreille P."/>
            <person name="Courtney L."/>
            <person name="Cloud J."/>
            <person name="Abbott A."/>
            <person name="Scott K."/>
            <person name="Johnson D."/>
            <person name="Minx P."/>
            <person name="Bentley D."/>
            <person name="Fulton B."/>
            <person name="Miller N."/>
            <person name="Greco T."/>
            <person name="Kemp K."/>
            <person name="Kramer J."/>
            <person name="Fulton L."/>
            <person name="Mardis E."/>
            <person name="Dante M."/>
            <person name="Pepin K."/>
            <person name="Hillier L.W."/>
            <person name="Nelson J."/>
            <person name="Spieth J."/>
            <person name="Ryan E."/>
            <person name="Andrews S."/>
            <person name="Geisel C."/>
            <person name="Layman D."/>
            <person name="Du H."/>
            <person name="Ali J."/>
            <person name="Berghoff A."/>
            <person name="Jones K."/>
            <person name="Drone K."/>
            <person name="Cotton M."/>
            <person name="Joshu C."/>
            <person name="Antonoiu B."/>
            <person name="Zidanic M."/>
            <person name="Strong C."/>
            <person name="Sun H."/>
            <person name="Lamar B."/>
            <person name="Yordan C."/>
            <person name="Ma P."/>
            <person name="Zhong J."/>
            <person name="Preston R."/>
            <person name="Vil D."/>
            <person name="Shekher M."/>
            <person name="Matero A."/>
            <person name="Shah R."/>
            <person name="Swaby I.K."/>
            <person name="O'Shaughnessy A."/>
            <person name="Rodriguez M."/>
            <person name="Hoffman J."/>
            <person name="Till S."/>
            <person name="Granat S."/>
            <person name="Shohdy N."/>
            <person name="Hasegawa A."/>
            <person name="Hameed A."/>
            <person name="Lodhi M."/>
            <person name="Johnson A."/>
            <person name="Chen E."/>
            <person name="Marra M.A."/>
            <person name="Martienssen R."/>
            <person name="McCombie W.R."/>
        </authorList>
    </citation>
    <scope>NUCLEOTIDE SEQUENCE [LARGE SCALE GENOMIC DNA]</scope>
    <source>
        <strain>cv. Columbia</strain>
    </source>
</reference>
<reference key="2">
    <citation type="journal article" date="2017" name="Plant J.">
        <title>Araport11: a complete reannotation of the Arabidopsis thaliana reference genome.</title>
        <authorList>
            <person name="Cheng C.Y."/>
            <person name="Krishnakumar V."/>
            <person name="Chan A.P."/>
            <person name="Thibaud-Nissen F."/>
            <person name="Schobel S."/>
            <person name="Town C.D."/>
        </authorList>
    </citation>
    <scope>GENOME REANNOTATION</scope>
    <source>
        <strain>cv. Columbia</strain>
    </source>
</reference>
<dbReference type="EC" id="3.6.4.-" evidence="6"/>
<dbReference type="EMBL" id="AL049607">
    <property type="protein sequence ID" value="CAB40760.1"/>
    <property type="status" value="ALT_SEQ"/>
    <property type="molecule type" value="Genomic_DNA"/>
</dbReference>
<dbReference type="EMBL" id="AL161580">
    <property type="protein sequence ID" value="CAB79908.1"/>
    <property type="status" value="ALT_SEQ"/>
    <property type="molecule type" value="Genomic_DNA"/>
</dbReference>
<dbReference type="EMBL" id="CP002687">
    <property type="protein sequence ID" value="AEE85976.1"/>
    <property type="molecule type" value="Genomic_DNA"/>
</dbReference>
<dbReference type="PIR" id="T06312">
    <property type="entry name" value="T06312"/>
</dbReference>
<dbReference type="RefSeq" id="NP_194918.2">
    <molecule id="F4JTF6-1"/>
    <property type="nucleotide sequence ID" value="NM_119341.2"/>
</dbReference>
<dbReference type="SMR" id="F4JTF6"/>
<dbReference type="FunCoup" id="F4JTF6">
    <property type="interactions" value="2161"/>
</dbReference>
<dbReference type="STRING" id="3702.F4JTF6"/>
<dbReference type="PaxDb" id="3702-AT4G31900.1"/>
<dbReference type="EnsemblPlants" id="AT4G31900.1">
    <molecule id="F4JTF6-1"/>
    <property type="protein sequence ID" value="AT4G31900.1"/>
    <property type="gene ID" value="AT4G31900"/>
</dbReference>
<dbReference type="GeneID" id="829320"/>
<dbReference type="Gramene" id="AT4G31900.1">
    <molecule id="F4JTF6-1"/>
    <property type="protein sequence ID" value="AT4G31900.1"/>
    <property type="gene ID" value="AT4G31900"/>
</dbReference>
<dbReference type="KEGG" id="ath:AT4G31900"/>
<dbReference type="Araport" id="AT4G31900"/>
<dbReference type="TAIR" id="AT4G31900">
    <property type="gene designation" value="PKR2"/>
</dbReference>
<dbReference type="eggNOG" id="KOG0383">
    <property type="taxonomic scope" value="Eukaryota"/>
</dbReference>
<dbReference type="HOGENOM" id="CLU_000315_31_1_1"/>
<dbReference type="InParanoid" id="F4JTF6"/>
<dbReference type="PRO" id="PR:F4JTF6"/>
<dbReference type="Proteomes" id="UP000006548">
    <property type="component" value="Chromosome 4"/>
</dbReference>
<dbReference type="ExpressionAtlas" id="F4JTF6">
    <property type="expression patterns" value="baseline and differential"/>
</dbReference>
<dbReference type="GO" id="GO:0005634">
    <property type="term" value="C:nucleus"/>
    <property type="evidence" value="ECO:0007669"/>
    <property type="project" value="UniProtKB-SubCell"/>
</dbReference>
<dbReference type="GO" id="GO:0005524">
    <property type="term" value="F:ATP binding"/>
    <property type="evidence" value="ECO:0007669"/>
    <property type="project" value="UniProtKB-KW"/>
</dbReference>
<dbReference type="GO" id="GO:0003677">
    <property type="term" value="F:DNA binding"/>
    <property type="evidence" value="ECO:0007669"/>
    <property type="project" value="UniProtKB-KW"/>
</dbReference>
<dbReference type="GO" id="GO:0004386">
    <property type="term" value="F:helicase activity"/>
    <property type="evidence" value="ECO:0007669"/>
    <property type="project" value="UniProtKB-KW"/>
</dbReference>
<dbReference type="GO" id="GO:0016787">
    <property type="term" value="F:hydrolase activity"/>
    <property type="evidence" value="ECO:0007669"/>
    <property type="project" value="UniProtKB-KW"/>
</dbReference>
<dbReference type="GO" id="GO:0006338">
    <property type="term" value="P:chromatin remodeling"/>
    <property type="evidence" value="ECO:0007669"/>
    <property type="project" value="InterPro"/>
</dbReference>
<dbReference type="CDD" id="cd18660">
    <property type="entry name" value="CD1_tandem"/>
    <property type="match status" value="1"/>
</dbReference>
<dbReference type="CDD" id="cd18659">
    <property type="entry name" value="CD2_tandem"/>
    <property type="match status" value="1"/>
</dbReference>
<dbReference type="CDD" id="cd18793">
    <property type="entry name" value="SF2_C_SNF"/>
    <property type="match status" value="1"/>
</dbReference>
<dbReference type="Gene3D" id="2.40.50.40">
    <property type="match status" value="2"/>
</dbReference>
<dbReference type="Gene3D" id="1.10.10.60">
    <property type="entry name" value="Homeodomain-like"/>
    <property type="match status" value="1"/>
</dbReference>
<dbReference type="Gene3D" id="3.40.50.300">
    <property type="entry name" value="P-loop containing nucleotide triphosphate hydrolases"/>
    <property type="match status" value="1"/>
</dbReference>
<dbReference type="Gene3D" id="3.40.50.10810">
    <property type="entry name" value="Tandem AAA-ATPase domain"/>
    <property type="match status" value="1"/>
</dbReference>
<dbReference type="InterPro" id="IPR009462">
    <property type="entry name" value="CHD_II_SANT-like"/>
</dbReference>
<dbReference type="InterPro" id="IPR016197">
    <property type="entry name" value="Chromo-like_dom_sf"/>
</dbReference>
<dbReference type="InterPro" id="IPR000953">
    <property type="entry name" value="Chromo/chromo_shadow_dom"/>
</dbReference>
<dbReference type="InterPro" id="IPR023780">
    <property type="entry name" value="Chromo_domain"/>
</dbReference>
<dbReference type="InterPro" id="IPR009463">
    <property type="entry name" value="DUF1087"/>
</dbReference>
<dbReference type="InterPro" id="IPR014001">
    <property type="entry name" value="Helicase_ATP-bd"/>
</dbReference>
<dbReference type="InterPro" id="IPR001650">
    <property type="entry name" value="Helicase_C-like"/>
</dbReference>
<dbReference type="InterPro" id="IPR027417">
    <property type="entry name" value="P-loop_NTPase"/>
</dbReference>
<dbReference type="InterPro" id="IPR038718">
    <property type="entry name" value="SNF2-like_sf"/>
</dbReference>
<dbReference type="InterPro" id="IPR049730">
    <property type="entry name" value="SNF2/RAD54-like_C"/>
</dbReference>
<dbReference type="InterPro" id="IPR000330">
    <property type="entry name" value="SNF2_N"/>
</dbReference>
<dbReference type="PANTHER" id="PTHR45623:SF17">
    <property type="entry name" value="CHROMODOMAIN-HELICASE-DNA-BINDING PROTEIN 3-RELATED"/>
    <property type="match status" value="1"/>
</dbReference>
<dbReference type="PANTHER" id="PTHR45623">
    <property type="entry name" value="CHROMODOMAIN-HELICASE-DNA-BINDING PROTEIN 3-RELATED-RELATED"/>
    <property type="match status" value="1"/>
</dbReference>
<dbReference type="Pfam" id="PF06461">
    <property type="entry name" value="CHDII_SANT-like"/>
    <property type="match status" value="1"/>
</dbReference>
<dbReference type="Pfam" id="PF00385">
    <property type="entry name" value="Chromo"/>
    <property type="match status" value="2"/>
</dbReference>
<dbReference type="Pfam" id="PF06465">
    <property type="entry name" value="DUF1087"/>
    <property type="match status" value="1"/>
</dbReference>
<dbReference type="Pfam" id="PF00271">
    <property type="entry name" value="Helicase_C"/>
    <property type="match status" value="1"/>
</dbReference>
<dbReference type="Pfam" id="PF00176">
    <property type="entry name" value="SNF2-rel_dom"/>
    <property type="match status" value="1"/>
</dbReference>
<dbReference type="SMART" id="SM00298">
    <property type="entry name" value="CHROMO"/>
    <property type="match status" value="2"/>
</dbReference>
<dbReference type="SMART" id="SM00487">
    <property type="entry name" value="DEXDc"/>
    <property type="match status" value="1"/>
</dbReference>
<dbReference type="SMART" id="SM01146">
    <property type="entry name" value="DUF1086"/>
    <property type="match status" value="1"/>
</dbReference>
<dbReference type="SMART" id="SM01147">
    <property type="entry name" value="DUF1087"/>
    <property type="match status" value="1"/>
</dbReference>
<dbReference type="SMART" id="SM00490">
    <property type="entry name" value="HELICc"/>
    <property type="match status" value="1"/>
</dbReference>
<dbReference type="SUPFAM" id="SSF54160">
    <property type="entry name" value="Chromo domain-like"/>
    <property type="match status" value="2"/>
</dbReference>
<dbReference type="SUPFAM" id="SSF52540">
    <property type="entry name" value="P-loop containing nucleoside triphosphate hydrolases"/>
    <property type="match status" value="2"/>
</dbReference>
<dbReference type="PROSITE" id="PS50013">
    <property type="entry name" value="CHROMO_2"/>
    <property type="match status" value="2"/>
</dbReference>
<dbReference type="PROSITE" id="PS51192">
    <property type="entry name" value="HELICASE_ATP_BIND_1"/>
    <property type="match status" value="1"/>
</dbReference>
<dbReference type="PROSITE" id="PS51194">
    <property type="entry name" value="HELICASE_CTER"/>
    <property type="match status" value="1"/>
</dbReference>
<sequence>MANLLQRLRRRTGPKPDYIEDKLDEYIREEQVEETGGSNQDCPLGEIEKILDREWRPTASNNPNSSDNGTPTLVVVKQYLVKWKGLSYLHCSWVPEQEFEKAYKSHPHLKLKLRVTRFNAAMDVFIAENGAHEFIAIRPEWKTVDRIIACREGDDGEEYLVKYKELSYRNSYWESESDISDFQNEIQRFKDINSSSRRDKYVENERNREEFKQFDLTPEFLTGTLHTYQLEGLNFLRYSWSKKTNVILADEMGLGKTIQSIAFLASLFEENLSPHLVVAPLSTIRNWEREFATWAPHMNVVMYTGDSEARDVIWEHEFYFSEGRKSKFDVLLTTYEMVHPGISVLSPIKWTCMIIDEGHRLKNQKSKLYSSLSQFTSKHIVLLTGTPLQNNLNELFALMHFLDADKFGSLEKFQDINKEEQISRLHQMLAPHLLRRLKKDVLKDKVPPKKELILRVDMSSQQKEVYKAVITNNYQVLTKKRDAKISNVLMKLRQVCSHPYLLPDFEPRFEDANEAFTKLLEASGKLQLLDKMMVKLKEQGHRVLIYTQFQHTLYLLEDYFTFKNWNYERIDGKISGPERQVRIDRFNAENSNRFCFLLSTRAGGIGINLATADTVIIYDSDWNPHADLQAMARVHRLGQTNKVMIYRLIHKGTVEERMMEITKNKMLLEHLVVGKQHLCQDELDDIIKYGSKELFSEENDEAGRSGKIHYDDAAIEQLLDRNHVDAVEVSLDDEEETDFLKNFKVASFEYVDDENEAAALEEAQAIENNSSVRNADRTSHWKDLLKDKYEVQQAEELSALGKRKRNGKQVMYAEDDLDGLEEISDEEDEYCLDDLKVTSDEEEEADEPEAARQRKPRTVTRPYRKRARDNSEEIPLMEGEGRYLMVLGFNETERDIFLRTFKRYGAGNFDWKEFVNPLYMKTYDEINKYGILFLKHIAENPTDNSTNFKVITAMVYADGVPKEGISSDELLVSMTFMMLVKEKCQFLDNHPTAPVFSNYVISKYNLRNGAFSKEEHDRILIPAVSKHGYGRWVAIVEDEEIGFQEVACKDLNIPFPPDTKSARKRICDHVGKRVKKMEDAIKYEYAEKILAEQAKAETKGTSFVDAEKEMLKNDPITSKKNSATAVDNKQGRVEMAQSYDQSVNEKSGESFQTYLDIQPLNRMPRESFKPLEPINEEISTRLSVGTDHDVEMDAADNIIVLD</sequence>
<comment type="function">
    <text evidence="1">Chromatin remodeling factor that represses the expression of embryonic trait genes upon and after seed germination and thus enables the developmental switch to post-germinative growth.</text>
</comment>
<comment type="subcellular location">
    <subcellularLocation>
        <location evidence="1">Nucleus</location>
    </subcellularLocation>
</comment>
<comment type="alternative products">
    <event type="alternative splicing"/>
    <isoform>
        <id>F4JTF6-1</id>
        <name>1</name>
        <sequence type="displayed"/>
    </isoform>
    <text evidence="6">A number of isoforms are produced. According to EST sequences.</text>
</comment>
<comment type="similarity">
    <text evidence="6">Belongs to the SNF2/RAD54 helicase family.</text>
</comment>
<comment type="sequence caution" evidence="6">
    <conflict type="erroneous gene model prediction">
        <sequence resource="EMBL-CDS" id="CAB40760"/>
    </conflict>
</comment>
<comment type="sequence caution" evidence="6">
    <conflict type="erroneous gene model prediction">
        <sequence resource="EMBL-CDS" id="CAB79908"/>
    </conflict>
</comment>
<protein>
    <recommendedName>
        <fullName evidence="6">CHD3-type chromatin-remodeling factor CHR7</fullName>
        <ecNumber evidence="6">3.6.4.-</ecNumber>
    </recommendedName>
    <alternativeName>
        <fullName evidence="6">Protein CHROMATIN REMODELING 7</fullName>
    </alternativeName>
    <alternativeName>
        <fullName evidence="6">Protein PICKLE RELATED 2</fullName>
    </alternativeName>
</protein>
<gene>
    <name evidence="6" type="primary">CHR7</name>
    <name evidence="8" type="synonym">PKR2</name>
    <name evidence="7" type="ordered locus">At4g31900</name>
</gene>
<name>CHR7_ARATH</name>
<evidence type="ECO:0000250" key="1">
    <source>
        <dbReference type="UniProtKB" id="Q9S775"/>
    </source>
</evidence>
<evidence type="ECO:0000255" key="2">
    <source>
        <dbReference type="PROSITE-ProRule" id="PRU00053"/>
    </source>
</evidence>
<evidence type="ECO:0000255" key="3">
    <source>
        <dbReference type="PROSITE-ProRule" id="PRU00541"/>
    </source>
</evidence>
<evidence type="ECO:0000255" key="4">
    <source>
        <dbReference type="PROSITE-ProRule" id="PRU00542"/>
    </source>
</evidence>
<evidence type="ECO:0000256" key="5">
    <source>
        <dbReference type="SAM" id="MobiDB-lite"/>
    </source>
</evidence>
<evidence type="ECO:0000305" key="6"/>
<evidence type="ECO:0000312" key="7">
    <source>
        <dbReference type="Araport" id="AT4G31900"/>
    </source>
</evidence>
<evidence type="ECO:0000312" key="8">
    <source>
        <dbReference type="EMBL" id="AEE85976.1"/>
    </source>
</evidence>
<keyword id="KW-0025">Alternative splicing</keyword>
<keyword id="KW-0067">ATP-binding</keyword>
<keyword id="KW-0156">Chromatin regulator</keyword>
<keyword id="KW-0238">DNA-binding</keyword>
<keyword id="KW-0347">Helicase</keyword>
<keyword id="KW-0378">Hydrolase</keyword>
<keyword id="KW-0547">Nucleotide-binding</keyword>
<keyword id="KW-0539">Nucleus</keyword>
<keyword id="KW-1185">Reference proteome</keyword>
<keyword id="KW-0677">Repeat</keyword>
<feature type="chain" id="PRO_0000435120" description="CHD3-type chromatin-remodeling factor CHR7">
    <location>
        <begin position="1"/>
        <end position="1202"/>
    </location>
</feature>
<feature type="domain" description="Chromo 1" evidence="2">
    <location>
        <begin position="45"/>
        <end position="109"/>
    </location>
</feature>
<feature type="domain" description="Chromo 2" evidence="2">
    <location>
        <begin position="142"/>
        <end position="201"/>
    </location>
</feature>
<feature type="domain" description="Helicase ATP-binding" evidence="3">
    <location>
        <begin position="237"/>
        <end position="405"/>
    </location>
</feature>
<feature type="domain" description="Helicase C-terminal" evidence="4">
    <location>
        <begin position="528"/>
        <end position="679"/>
    </location>
</feature>
<feature type="region of interest" description="Disordered" evidence="5">
    <location>
        <begin position="838"/>
        <end position="872"/>
    </location>
</feature>
<feature type="short sequence motif" description="DEAH box" evidence="3">
    <location>
        <begin position="356"/>
        <end position="359"/>
    </location>
</feature>
<feature type="compositionally biased region" description="Basic residues" evidence="5">
    <location>
        <begin position="853"/>
        <end position="867"/>
    </location>
</feature>
<feature type="binding site" evidence="3">
    <location>
        <begin position="250"/>
        <end position="257"/>
    </location>
    <ligand>
        <name>ATP</name>
        <dbReference type="ChEBI" id="CHEBI:30616"/>
    </ligand>
</feature>
<accession>F4JTF6</accession>
<accession>Q9SZ57</accession>
<organism>
    <name type="scientific">Arabidopsis thaliana</name>
    <name type="common">Mouse-ear cress</name>
    <dbReference type="NCBI Taxonomy" id="3702"/>
    <lineage>
        <taxon>Eukaryota</taxon>
        <taxon>Viridiplantae</taxon>
        <taxon>Streptophyta</taxon>
        <taxon>Embryophyta</taxon>
        <taxon>Tracheophyta</taxon>
        <taxon>Spermatophyta</taxon>
        <taxon>Magnoliopsida</taxon>
        <taxon>eudicotyledons</taxon>
        <taxon>Gunneridae</taxon>
        <taxon>Pentapetalae</taxon>
        <taxon>rosids</taxon>
        <taxon>malvids</taxon>
        <taxon>Brassicales</taxon>
        <taxon>Brassicaceae</taxon>
        <taxon>Camelineae</taxon>
        <taxon>Arabidopsis</taxon>
    </lineage>
</organism>